<protein>
    <recommendedName>
        <fullName>Putative transmembrane protein FLJ36131</fullName>
    </recommendedName>
</protein>
<comment type="subcellular location">
    <subcellularLocation>
        <location evidence="2">Membrane</location>
        <topology evidence="2">Single-pass membrane protein</topology>
    </subcellularLocation>
</comment>
<comment type="caution">
    <text evidence="2">Could be the product of a pseudogene.</text>
</comment>
<feature type="chain" id="PRO_0000325974" description="Putative transmembrane protein FLJ36131">
    <location>
        <begin position="1"/>
        <end position="124"/>
    </location>
</feature>
<feature type="topological domain" description="Cytoplasmic" evidence="1">
    <location>
        <begin position="1"/>
        <end position="2"/>
    </location>
</feature>
<feature type="transmembrane region" description="Helical" evidence="1">
    <location>
        <begin position="3"/>
        <end position="23"/>
    </location>
</feature>
<feature type="topological domain" description="Extracellular" evidence="1">
    <location>
        <begin position="24"/>
        <end position="124"/>
    </location>
</feature>
<feature type="glycosylation site" description="N-linked (GlcNAc...) asparagine" evidence="1">
    <location>
        <position position="41"/>
    </location>
</feature>
<evidence type="ECO:0000255" key="1"/>
<evidence type="ECO:0000305" key="2"/>
<accession>Q8N9W7</accession>
<proteinExistence type="uncertain"/>
<sequence>MYVSISFLLGLSHLVLCCLLTFIVNFYLPPESIDFEFMAHNWSKGRSPSSTLGLSWFKAGFRFSDGWSMFYSFGLPGVALPGSPPRSHLLPGTQILIRSFQPCESAKHSARLSSLLTTTSYSVS</sequence>
<name>YO010_HUMAN</name>
<dbReference type="EMBL" id="AK093450">
    <property type="protein sequence ID" value="BAC04170.1"/>
    <property type="molecule type" value="mRNA"/>
</dbReference>
<dbReference type="GlyGen" id="Q8N9W7">
    <property type="glycosylation" value="1 site"/>
</dbReference>
<dbReference type="BioMuta" id="-"/>
<dbReference type="neXtProt" id="NX_Q8N9W7"/>
<dbReference type="InParanoid" id="Q8N9W7"/>
<dbReference type="PAN-GO" id="Q8N9W7">
    <property type="GO annotations" value="0 GO annotations based on evolutionary models"/>
</dbReference>
<dbReference type="PhylomeDB" id="Q8N9W7"/>
<dbReference type="Pharos" id="Q8N9W7">
    <property type="development level" value="Tdark"/>
</dbReference>
<dbReference type="Proteomes" id="UP000005640">
    <property type="component" value="Unplaced"/>
</dbReference>
<dbReference type="RNAct" id="Q8N9W7">
    <property type="molecule type" value="protein"/>
</dbReference>
<dbReference type="GO" id="GO:0016020">
    <property type="term" value="C:membrane"/>
    <property type="evidence" value="ECO:0007669"/>
    <property type="project" value="UniProtKB-SubCell"/>
</dbReference>
<keyword id="KW-0325">Glycoprotein</keyword>
<keyword id="KW-0472">Membrane</keyword>
<keyword id="KW-1185">Reference proteome</keyword>
<keyword id="KW-0735">Signal-anchor</keyword>
<keyword id="KW-0812">Transmembrane</keyword>
<keyword id="KW-1133">Transmembrane helix</keyword>
<reference key="1">
    <citation type="journal article" date="2004" name="Nat. Genet.">
        <title>Complete sequencing and characterization of 21,243 full-length human cDNAs.</title>
        <authorList>
            <person name="Ota T."/>
            <person name="Suzuki Y."/>
            <person name="Nishikawa T."/>
            <person name="Otsuki T."/>
            <person name="Sugiyama T."/>
            <person name="Irie R."/>
            <person name="Wakamatsu A."/>
            <person name="Hayashi K."/>
            <person name="Sato H."/>
            <person name="Nagai K."/>
            <person name="Kimura K."/>
            <person name="Makita H."/>
            <person name="Sekine M."/>
            <person name="Obayashi M."/>
            <person name="Nishi T."/>
            <person name="Shibahara T."/>
            <person name="Tanaka T."/>
            <person name="Ishii S."/>
            <person name="Yamamoto J."/>
            <person name="Saito K."/>
            <person name="Kawai Y."/>
            <person name="Isono Y."/>
            <person name="Nakamura Y."/>
            <person name="Nagahari K."/>
            <person name="Murakami K."/>
            <person name="Yasuda T."/>
            <person name="Iwayanagi T."/>
            <person name="Wagatsuma M."/>
            <person name="Shiratori A."/>
            <person name="Sudo H."/>
            <person name="Hosoiri T."/>
            <person name="Kaku Y."/>
            <person name="Kodaira H."/>
            <person name="Kondo H."/>
            <person name="Sugawara M."/>
            <person name="Takahashi M."/>
            <person name="Kanda K."/>
            <person name="Yokoi T."/>
            <person name="Furuya T."/>
            <person name="Kikkawa E."/>
            <person name="Omura Y."/>
            <person name="Abe K."/>
            <person name="Kamihara K."/>
            <person name="Katsuta N."/>
            <person name="Sato K."/>
            <person name="Tanikawa M."/>
            <person name="Yamazaki M."/>
            <person name="Ninomiya K."/>
            <person name="Ishibashi T."/>
            <person name="Yamashita H."/>
            <person name="Murakawa K."/>
            <person name="Fujimori K."/>
            <person name="Tanai H."/>
            <person name="Kimata M."/>
            <person name="Watanabe M."/>
            <person name="Hiraoka S."/>
            <person name="Chiba Y."/>
            <person name="Ishida S."/>
            <person name="Ono Y."/>
            <person name="Takiguchi S."/>
            <person name="Watanabe S."/>
            <person name="Yosida M."/>
            <person name="Hotuta T."/>
            <person name="Kusano J."/>
            <person name="Kanehori K."/>
            <person name="Takahashi-Fujii A."/>
            <person name="Hara H."/>
            <person name="Tanase T.-O."/>
            <person name="Nomura Y."/>
            <person name="Togiya S."/>
            <person name="Komai F."/>
            <person name="Hara R."/>
            <person name="Takeuchi K."/>
            <person name="Arita M."/>
            <person name="Imose N."/>
            <person name="Musashino K."/>
            <person name="Yuuki H."/>
            <person name="Oshima A."/>
            <person name="Sasaki N."/>
            <person name="Aotsuka S."/>
            <person name="Yoshikawa Y."/>
            <person name="Matsunawa H."/>
            <person name="Ichihara T."/>
            <person name="Shiohata N."/>
            <person name="Sano S."/>
            <person name="Moriya S."/>
            <person name="Momiyama H."/>
            <person name="Satoh N."/>
            <person name="Takami S."/>
            <person name="Terashima Y."/>
            <person name="Suzuki O."/>
            <person name="Nakagawa S."/>
            <person name="Senoh A."/>
            <person name="Mizoguchi H."/>
            <person name="Goto Y."/>
            <person name="Shimizu F."/>
            <person name="Wakebe H."/>
            <person name="Hishigaki H."/>
            <person name="Watanabe T."/>
            <person name="Sugiyama A."/>
            <person name="Takemoto M."/>
            <person name="Kawakami B."/>
            <person name="Yamazaki M."/>
            <person name="Watanabe K."/>
            <person name="Kumagai A."/>
            <person name="Itakura S."/>
            <person name="Fukuzumi Y."/>
            <person name="Fujimori Y."/>
            <person name="Komiyama M."/>
            <person name="Tashiro H."/>
            <person name="Tanigami A."/>
            <person name="Fujiwara T."/>
            <person name="Ono T."/>
            <person name="Yamada K."/>
            <person name="Fujii Y."/>
            <person name="Ozaki K."/>
            <person name="Hirao M."/>
            <person name="Ohmori Y."/>
            <person name="Kawabata A."/>
            <person name="Hikiji T."/>
            <person name="Kobatake N."/>
            <person name="Inagaki H."/>
            <person name="Ikema Y."/>
            <person name="Okamoto S."/>
            <person name="Okitani R."/>
            <person name="Kawakami T."/>
            <person name="Noguchi S."/>
            <person name="Itoh T."/>
            <person name="Shigeta K."/>
            <person name="Senba T."/>
            <person name="Matsumura K."/>
            <person name="Nakajima Y."/>
            <person name="Mizuno T."/>
            <person name="Morinaga M."/>
            <person name="Sasaki M."/>
            <person name="Togashi T."/>
            <person name="Oyama M."/>
            <person name="Hata H."/>
            <person name="Watanabe M."/>
            <person name="Komatsu T."/>
            <person name="Mizushima-Sugano J."/>
            <person name="Satoh T."/>
            <person name="Shirai Y."/>
            <person name="Takahashi Y."/>
            <person name="Nakagawa K."/>
            <person name="Okumura K."/>
            <person name="Nagase T."/>
            <person name="Nomura N."/>
            <person name="Kikuchi H."/>
            <person name="Masuho Y."/>
            <person name="Yamashita R."/>
            <person name="Nakai K."/>
            <person name="Yada T."/>
            <person name="Nakamura Y."/>
            <person name="Ohara O."/>
            <person name="Isogai T."/>
            <person name="Sugano S."/>
        </authorList>
    </citation>
    <scope>NUCLEOTIDE SEQUENCE [LARGE SCALE MRNA]</scope>
    <source>
        <tissue>Testis</tissue>
    </source>
</reference>
<organism>
    <name type="scientific">Homo sapiens</name>
    <name type="common">Human</name>
    <dbReference type="NCBI Taxonomy" id="9606"/>
    <lineage>
        <taxon>Eukaryota</taxon>
        <taxon>Metazoa</taxon>
        <taxon>Chordata</taxon>
        <taxon>Craniata</taxon>
        <taxon>Vertebrata</taxon>
        <taxon>Euteleostomi</taxon>
        <taxon>Mammalia</taxon>
        <taxon>Eutheria</taxon>
        <taxon>Euarchontoglires</taxon>
        <taxon>Primates</taxon>
        <taxon>Haplorrhini</taxon>
        <taxon>Catarrhini</taxon>
        <taxon>Hominidae</taxon>
        <taxon>Homo</taxon>
    </lineage>
</organism>